<comment type="function">
    <text>Snake venom phospholipase A2 (PLA2) that inhibits neuromuscular transmission by blocking acetylcholine release from the nerve termini. PLA2 catalyzes the calcium-dependent hydrolysis of the 2-acyl groups in 3-sn-phosphoglycerides.</text>
</comment>
<comment type="catalytic activity">
    <reaction evidence="2 3">
        <text>a 1,2-diacyl-sn-glycero-3-phosphocholine + H2O = a 1-acyl-sn-glycero-3-phosphocholine + a fatty acid + H(+)</text>
        <dbReference type="Rhea" id="RHEA:15801"/>
        <dbReference type="ChEBI" id="CHEBI:15377"/>
        <dbReference type="ChEBI" id="CHEBI:15378"/>
        <dbReference type="ChEBI" id="CHEBI:28868"/>
        <dbReference type="ChEBI" id="CHEBI:57643"/>
        <dbReference type="ChEBI" id="CHEBI:58168"/>
        <dbReference type="EC" id="3.1.1.4"/>
    </reaction>
</comment>
<comment type="cofactor">
    <cofactor evidence="1">
        <name>Ca(2+)</name>
        <dbReference type="ChEBI" id="CHEBI:29108"/>
    </cofactor>
    <text evidence="1">Binds 1 Ca(2+) ion.</text>
</comment>
<comment type="subcellular location">
    <subcellularLocation>
        <location>Secreted</location>
    </subcellularLocation>
</comment>
<comment type="tissue specificity">
    <text>Expressed by the venom gland.</text>
</comment>
<comment type="similarity">
    <text evidence="4">Belongs to the phospholipase A2 family. Group I subfamily.</text>
</comment>
<keyword id="KW-0106">Calcium</keyword>
<keyword id="KW-0903">Direct protein sequencing</keyword>
<keyword id="KW-0378">Hydrolase</keyword>
<keyword id="KW-0442">Lipid degradation</keyword>
<keyword id="KW-0443">Lipid metabolism</keyword>
<keyword id="KW-0528">Neurotoxin</keyword>
<keyword id="KW-0638">Presynaptic neurotoxin</keyword>
<keyword id="KW-0964">Secreted</keyword>
<keyword id="KW-0800">Toxin</keyword>
<dbReference type="EC" id="3.1.1.4"/>
<dbReference type="PIR" id="B35948">
    <property type="entry name" value="B35948"/>
</dbReference>
<dbReference type="SMR" id="P21791"/>
<dbReference type="GO" id="GO:0005576">
    <property type="term" value="C:extracellular region"/>
    <property type="evidence" value="ECO:0007669"/>
    <property type="project" value="UniProtKB-SubCell"/>
</dbReference>
<dbReference type="GO" id="GO:0004623">
    <property type="term" value="F:phospholipase A2 activity"/>
    <property type="evidence" value="ECO:0007669"/>
    <property type="project" value="UniProtKB-EC"/>
</dbReference>
<dbReference type="GO" id="GO:0090729">
    <property type="term" value="F:toxin activity"/>
    <property type="evidence" value="ECO:0007669"/>
    <property type="project" value="UniProtKB-KW"/>
</dbReference>
<dbReference type="GO" id="GO:0050482">
    <property type="term" value="P:arachidonate secretion"/>
    <property type="evidence" value="ECO:0007669"/>
    <property type="project" value="InterPro"/>
</dbReference>
<dbReference type="GO" id="GO:0016042">
    <property type="term" value="P:lipid catabolic process"/>
    <property type="evidence" value="ECO:0007669"/>
    <property type="project" value="UniProtKB-KW"/>
</dbReference>
<dbReference type="GO" id="GO:0006644">
    <property type="term" value="P:phospholipid metabolic process"/>
    <property type="evidence" value="ECO:0007669"/>
    <property type="project" value="InterPro"/>
</dbReference>
<dbReference type="Gene3D" id="1.20.90.10">
    <property type="entry name" value="Phospholipase A2 domain"/>
    <property type="match status" value="1"/>
</dbReference>
<dbReference type="InterPro" id="IPR036444">
    <property type="entry name" value="PLipase_A2_dom_sf"/>
</dbReference>
<dbReference type="SUPFAM" id="SSF48619">
    <property type="entry name" value="Phospholipase A2, PLA2"/>
    <property type="match status" value="1"/>
</dbReference>
<reference key="1">
    <citation type="journal article" date="1990" name="Toxicon">
        <title>Isolation and characterization of three toxic phospholipases from the venom of the coral snake Micrurus nigrocinctus.</title>
        <authorList>
            <person name="Mochca-Morales J."/>
            <person name="Martin B.M."/>
            <person name="Zamudio F.Z."/>
            <person name="Possani L.D."/>
        </authorList>
    </citation>
    <scope>PROTEIN SEQUENCE</scope>
    <source>
        <tissue>Venom</tissue>
    </source>
</reference>
<name>PA22_MICNI</name>
<feature type="chain" id="PRO_0000161659" description="Phospholipase A2 2">
    <location>
        <begin position="1"/>
        <end position="28" status="greater than"/>
    </location>
</feature>
<feature type="non-terminal residue">
    <location>
        <position position="28"/>
    </location>
</feature>
<evidence type="ECO:0000250" key="1"/>
<evidence type="ECO:0000255" key="2">
    <source>
        <dbReference type="PROSITE-ProRule" id="PRU10035"/>
    </source>
</evidence>
<evidence type="ECO:0000255" key="3">
    <source>
        <dbReference type="PROSITE-ProRule" id="PRU10036"/>
    </source>
</evidence>
<evidence type="ECO:0000305" key="4"/>
<protein>
    <recommendedName>
        <fullName>Phospholipase A2 2</fullName>
        <shortName>svPLA2</shortName>
        <ecNumber>3.1.1.4</ecNumber>
    </recommendedName>
    <alternativeName>
        <fullName>Phosphatidylcholine 2-acylhydrolase</fullName>
    </alternativeName>
</protein>
<sequence>NLQYLKNMIKCTNTRHWLSFTNYGCYCG</sequence>
<accession>P21791</accession>
<organism>
    <name type="scientific">Micrurus nigrocinctus</name>
    <name type="common">Central American coral snake</name>
    <name type="synonym">Gargantilla</name>
    <dbReference type="NCBI Taxonomy" id="8635"/>
    <lineage>
        <taxon>Eukaryota</taxon>
        <taxon>Metazoa</taxon>
        <taxon>Chordata</taxon>
        <taxon>Craniata</taxon>
        <taxon>Vertebrata</taxon>
        <taxon>Euteleostomi</taxon>
        <taxon>Lepidosauria</taxon>
        <taxon>Squamata</taxon>
        <taxon>Bifurcata</taxon>
        <taxon>Unidentata</taxon>
        <taxon>Episquamata</taxon>
        <taxon>Toxicofera</taxon>
        <taxon>Serpentes</taxon>
        <taxon>Colubroidea</taxon>
        <taxon>Elapidae</taxon>
        <taxon>Elapinae</taxon>
        <taxon>Micrurus</taxon>
    </lineage>
</organism>
<proteinExistence type="evidence at protein level"/>